<proteinExistence type="inferred from homology"/>
<gene>
    <name type="ordered locus">Smlt1146</name>
</gene>
<accession>B2FRZ7</accession>
<protein>
    <recommendedName>
        <fullName evidence="1">PKHD-type hydroxylase Smlt1146</fullName>
        <ecNumber evidence="1">1.14.11.-</ecNumber>
    </recommendedName>
</protein>
<evidence type="ECO:0000255" key="1">
    <source>
        <dbReference type="HAMAP-Rule" id="MF_00657"/>
    </source>
</evidence>
<dbReference type="EC" id="1.14.11.-" evidence="1"/>
<dbReference type="EMBL" id="AM743169">
    <property type="protein sequence ID" value="CAQ44702.1"/>
    <property type="molecule type" value="Genomic_DNA"/>
</dbReference>
<dbReference type="RefSeq" id="WP_012479362.1">
    <property type="nucleotide sequence ID" value="NC_010943.1"/>
</dbReference>
<dbReference type="SMR" id="B2FRZ7"/>
<dbReference type="EnsemblBacteria" id="CAQ44702">
    <property type="protein sequence ID" value="CAQ44702"/>
    <property type="gene ID" value="Smlt1146"/>
</dbReference>
<dbReference type="KEGG" id="sml:Smlt1146"/>
<dbReference type="PATRIC" id="fig|522373.3.peg.1109"/>
<dbReference type="eggNOG" id="COG3128">
    <property type="taxonomic scope" value="Bacteria"/>
</dbReference>
<dbReference type="HOGENOM" id="CLU_106663_0_0_6"/>
<dbReference type="Proteomes" id="UP000008840">
    <property type="component" value="Chromosome"/>
</dbReference>
<dbReference type="GO" id="GO:0016706">
    <property type="term" value="F:2-oxoglutarate-dependent dioxygenase activity"/>
    <property type="evidence" value="ECO:0007669"/>
    <property type="project" value="UniProtKB-UniRule"/>
</dbReference>
<dbReference type="GO" id="GO:0005506">
    <property type="term" value="F:iron ion binding"/>
    <property type="evidence" value="ECO:0007669"/>
    <property type="project" value="UniProtKB-UniRule"/>
</dbReference>
<dbReference type="GO" id="GO:0031418">
    <property type="term" value="F:L-ascorbic acid binding"/>
    <property type="evidence" value="ECO:0007669"/>
    <property type="project" value="UniProtKB-KW"/>
</dbReference>
<dbReference type="GO" id="GO:0006974">
    <property type="term" value="P:DNA damage response"/>
    <property type="evidence" value="ECO:0007669"/>
    <property type="project" value="TreeGrafter"/>
</dbReference>
<dbReference type="GO" id="GO:0006879">
    <property type="term" value="P:intracellular iron ion homeostasis"/>
    <property type="evidence" value="ECO:0007669"/>
    <property type="project" value="TreeGrafter"/>
</dbReference>
<dbReference type="Gene3D" id="2.60.120.620">
    <property type="entry name" value="q2cbj1_9rhob like domain"/>
    <property type="match status" value="1"/>
</dbReference>
<dbReference type="Gene3D" id="4.10.860.20">
    <property type="entry name" value="Rabenosyn, Rab binding domain"/>
    <property type="match status" value="1"/>
</dbReference>
<dbReference type="HAMAP" id="MF_00657">
    <property type="entry name" value="Hydroxyl_YbiX"/>
    <property type="match status" value="1"/>
</dbReference>
<dbReference type="InterPro" id="IPR005123">
    <property type="entry name" value="Oxoglu/Fe-dep_dioxygenase_dom"/>
</dbReference>
<dbReference type="InterPro" id="IPR041097">
    <property type="entry name" value="PKHD_C"/>
</dbReference>
<dbReference type="InterPro" id="IPR023550">
    <property type="entry name" value="PKHD_hydroxylase"/>
</dbReference>
<dbReference type="InterPro" id="IPR006620">
    <property type="entry name" value="Pro_4_hyd_alph"/>
</dbReference>
<dbReference type="InterPro" id="IPR044862">
    <property type="entry name" value="Pro_4_hyd_alph_FE2OG_OXY"/>
</dbReference>
<dbReference type="NCBIfam" id="NF003974">
    <property type="entry name" value="PRK05467.1-3"/>
    <property type="match status" value="1"/>
</dbReference>
<dbReference type="NCBIfam" id="NF003975">
    <property type="entry name" value="PRK05467.1-4"/>
    <property type="match status" value="1"/>
</dbReference>
<dbReference type="PANTHER" id="PTHR41536">
    <property type="entry name" value="PKHD-TYPE HYDROXYLASE YBIX"/>
    <property type="match status" value="1"/>
</dbReference>
<dbReference type="PANTHER" id="PTHR41536:SF1">
    <property type="entry name" value="PKHD-TYPE HYDROXYLASE YBIX"/>
    <property type="match status" value="1"/>
</dbReference>
<dbReference type="Pfam" id="PF13640">
    <property type="entry name" value="2OG-FeII_Oxy_3"/>
    <property type="match status" value="1"/>
</dbReference>
<dbReference type="Pfam" id="PF18331">
    <property type="entry name" value="PKHD_C"/>
    <property type="match status" value="1"/>
</dbReference>
<dbReference type="SMART" id="SM00702">
    <property type="entry name" value="P4Hc"/>
    <property type="match status" value="1"/>
</dbReference>
<dbReference type="SUPFAM" id="SSF51197">
    <property type="entry name" value="Clavaminate synthase-like"/>
    <property type="match status" value="1"/>
</dbReference>
<dbReference type="PROSITE" id="PS51471">
    <property type="entry name" value="FE2OG_OXY"/>
    <property type="match status" value="1"/>
</dbReference>
<sequence>MLLHIPDILSADQVADFRRRLDAADWTDGRETVGHLGAQAKHNQQLPEGSPLRRELGEIILVALARHPLFFSAALPLKYLPPRFNRYSGGGTYGFHVDGAVMNLANGEQLRSDISCTLFLSAPYEYEGGELIISDTYGEHEVKLPAGDLIVYPSSSLHQVRPVTAGARVASFFWVQSMVRDDVQRRLLWEMDGSIERLRQTGGDAEAVLQLTGVYHNLLRRWSEV</sequence>
<name>Y1146_STRMK</name>
<comment type="cofactor">
    <cofactor evidence="1">
        <name>Fe(2+)</name>
        <dbReference type="ChEBI" id="CHEBI:29033"/>
    </cofactor>
    <text evidence="1">Binds 1 Fe(2+) ion per subunit.</text>
</comment>
<comment type="cofactor">
    <cofactor evidence="1">
        <name>L-ascorbate</name>
        <dbReference type="ChEBI" id="CHEBI:38290"/>
    </cofactor>
</comment>
<keyword id="KW-0223">Dioxygenase</keyword>
<keyword id="KW-0408">Iron</keyword>
<keyword id="KW-0479">Metal-binding</keyword>
<keyword id="KW-0560">Oxidoreductase</keyword>
<keyword id="KW-1185">Reference proteome</keyword>
<keyword id="KW-0847">Vitamin C</keyword>
<reference key="1">
    <citation type="journal article" date="2008" name="Genome Biol.">
        <title>The complete genome, comparative and functional analysis of Stenotrophomonas maltophilia reveals an organism heavily shielded by drug resistance determinants.</title>
        <authorList>
            <person name="Crossman L.C."/>
            <person name="Gould V.C."/>
            <person name="Dow J.M."/>
            <person name="Vernikos G.S."/>
            <person name="Okazaki A."/>
            <person name="Sebaihia M."/>
            <person name="Saunders D."/>
            <person name="Arrowsmith C."/>
            <person name="Carver T."/>
            <person name="Peters N."/>
            <person name="Adlem E."/>
            <person name="Kerhornou A."/>
            <person name="Lord A."/>
            <person name="Murphy L."/>
            <person name="Seeger K."/>
            <person name="Squares R."/>
            <person name="Rutter S."/>
            <person name="Quail M.A."/>
            <person name="Rajandream M.A."/>
            <person name="Harris D."/>
            <person name="Churcher C."/>
            <person name="Bentley S.D."/>
            <person name="Parkhill J."/>
            <person name="Thomson N.R."/>
            <person name="Avison M.B."/>
        </authorList>
    </citation>
    <scope>NUCLEOTIDE SEQUENCE [LARGE SCALE GENOMIC DNA]</scope>
    <source>
        <strain>K279a</strain>
    </source>
</reference>
<organism>
    <name type="scientific">Stenotrophomonas maltophilia (strain K279a)</name>
    <dbReference type="NCBI Taxonomy" id="522373"/>
    <lineage>
        <taxon>Bacteria</taxon>
        <taxon>Pseudomonadati</taxon>
        <taxon>Pseudomonadota</taxon>
        <taxon>Gammaproteobacteria</taxon>
        <taxon>Lysobacterales</taxon>
        <taxon>Lysobacteraceae</taxon>
        <taxon>Stenotrophomonas</taxon>
        <taxon>Stenotrophomonas maltophilia group</taxon>
    </lineage>
</organism>
<feature type="chain" id="PRO_0000346524" description="PKHD-type hydroxylase Smlt1146">
    <location>
        <begin position="1"/>
        <end position="225"/>
    </location>
</feature>
<feature type="domain" description="Fe2OG dioxygenase" evidence="1">
    <location>
        <begin position="78"/>
        <end position="177"/>
    </location>
</feature>
<feature type="binding site" evidence="1">
    <location>
        <position position="96"/>
    </location>
    <ligand>
        <name>Fe cation</name>
        <dbReference type="ChEBI" id="CHEBI:24875"/>
    </ligand>
</feature>
<feature type="binding site" evidence="1">
    <location>
        <position position="98"/>
    </location>
    <ligand>
        <name>Fe cation</name>
        <dbReference type="ChEBI" id="CHEBI:24875"/>
    </ligand>
</feature>
<feature type="binding site" evidence="1">
    <location>
        <position position="158"/>
    </location>
    <ligand>
        <name>Fe cation</name>
        <dbReference type="ChEBI" id="CHEBI:24875"/>
    </ligand>
</feature>
<feature type="binding site" evidence="1">
    <location>
        <position position="168"/>
    </location>
    <ligand>
        <name>2-oxoglutarate</name>
        <dbReference type="ChEBI" id="CHEBI:16810"/>
    </ligand>
</feature>